<evidence type="ECO:0000255" key="1">
    <source>
        <dbReference type="HAMAP-Rule" id="MF_01322"/>
    </source>
</evidence>
<reference key="1">
    <citation type="journal article" date="2008" name="PLoS ONE">
        <title>Survival in nuclear waste, extreme resistance, and potential applications gleaned from the genome sequence of Kineococcus radiotolerans SRS30216.</title>
        <authorList>
            <person name="Bagwell C.E."/>
            <person name="Bhat S."/>
            <person name="Hawkins G.M."/>
            <person name="Smith B.W."/>
            <person name="Biswas T."/>
            <person name="Hoover T.R."/>
            <person name="Saunders E."/>
            <person name="Han C.S."/>
            <person name="Tsodikov O.V."/>
            <person name="Shimkets L.J."/>
        </authorList>
    </citation>
    <scope>NUCLEOTIDE SEQUENCE [LARGE SCALE GENOMIC DNA]</scope>
    <source>
        <strain>ATCC BAA-149 / DSM 14245 / SRS30216</strain>
    </source>
</reference>
<protein>
    <recommendedName>
        <fullName evidence="1">DNA-directed RNA polymerase subunit beta'</fullName>
        <shortName evidence="1">RNAP subunit beta'</shortName>
        <ecNumber evidence="1">2.7.7.6</ecNumber>
    </recommendedName>
    <alternativeName>
        <fullName evidence="1">RNA polymerase subunit beta'</fullName>
    </alternativeName>
    <alternativeName>
        <fullName evidence="1">Transcriptase subunit beta'</fullName>
    </alternativeName>
</protein>
<sequence length="1293" mass="144099">MLDVNFFDELRIGLATAEDIRTWSHGEVKKPETINYRTLKPEKDGLFCEKIFGPTRDWECYCGKYKRVRFKGIICERCGVEVTRAKVRRERMGHIELAAPVTHIWYFKGVPSRLGYLLDLAPKDLEKVIYFAAYMITSVDDEARQRDFSSLEAQIEVEKREVENRRDSDVETRAKTLEQDLAELEAEGAKSDVRRKVRESAEREMAQIRRRADAEIDRLATIWDRFRTLKVQDLEGDEVLYRAMRERFGLYFEGGMGAAALQKRLQSFDLEAEAESLRETIATGKGQRKTRALKRLKVVSAFLTTRNSPEGMVLDCVPVIPPDLRPMVQLDGGRFATSDLNDLYRRVINRNNRLKRLLDLGAPEIIVNNEKRMLQEAVDALFDNGRRGRPVTGPGNRPLKSLSDMLKGKQGRFRQNLLGKRVDYSGRSVIVVGPQLKLHQCGLPKQMALELFKPFVMKRLVDLSHAQNIKSAKRMVERARPVVWDVLSEVITEHPVLLNRAPTLHRLGIQAFEPQLVEGKAIQIHPLVCTAFNADFDGDQMAVHVPLSAEAQAEARILMLSSNNILKPADGRPVTMPTQDMIIGLYHLTADRDDVAGEGRQFSSLAEAIMAFDAKQLNLNAKVRIRLSGVVPTSAMALPEDWQQGDDLDVETTLGRALFNETLPVDYEYVNVVVDKKQLSAIVNDLAERYPKVQVAATLDALKEAGFHWATRSGTTVSIADVVTPPNKQAILETYEAKAEKVQQQYERGLITDDERRQELIEIWTQATNDVAKDLEAAMPTHNTIHRMVSSGARGNWMQMRQLAGMRGLMANPKGEIIPRPVKASFREGLTVGEFFITTHGARKGLADTALRTADSGYLTRRLVDVSQDVIVREDDCGTFRGLSMPIAEKNSDGSLRRHDDVETSVYARTLATDVVVDGEVVLPAGSDLGDVVIDALVERGVESLKVRSVLTCESRVGTCARCYGRSLASGKLVDIGEAVGIVAAQSIGEPGTQLTMRTFHTGGAASESGDITHGLPRVVELFEARTPKGNAPISEVAGRTRIEETDKGRKIVVTPDDGAEEVEYPVTRRQRLLVEDGTHVEVGQKLVQGAVDPKQVLRILGPRRVQMHLVDEVQEVYRSQGVSIHDKHIEVIVRQMLKRVTIIEQNGSELLPGELVERARFEEENRRVMAEGGQPSSGRPELMGITKASLATDSWLSAASFQETTRVLTNAAMEGKSDPLLGLKENVIIGKLIPAGTGLPRYRNVRVEPTEEAKAQMYSVPGYDDVDYAQFGVGSGQAVPLEEFDYGSSDYR</sequence>
<keyword id="KW-0240">DNA-directed RNA polymerase</keyword>
<keyword id="KW-0460">Magnesium</keyword>
<keyword id="KW-0479">Metal-binding</keyword>
<keyword id="KW-0548">Nucleotidyltransferase</keyword>
<keyword id="KW-1185">Reference proteome</keyword>
<keyword id="KW-0804">Transcription</keyword>
<keyword id="KW-0808">Transferase</keyword>
<keyword id="KW-0862">Zinc</keyword>
<organism>
    <name type="scientific">Kineococcus radiotolerans (strain ATCC BAA-149 / DSM 14245 / SRS30216)</name>
    <dbReference type="NCBI Taxonomy" id="266940"/>
    <lineage>
        <taxon>Bacteria</taxon>
        <taxon>Bacillati</taxon>
        <taxon>Actinomycetota</taxon>
        <taxon>Actinomycetes</taxon>
        <taxon>Kineosporiales</taxon>
        <taxon>Kineosporiaceae</taxon>
        <taxon>Kineococcus</taxon>
    </lineage>
</organism>
<gene>
    <name evidence="1" type="primary">rpoC</name>
    <name type="ordered locus">Krad_0681</name>
</gene>
<accession>A6W5T1</accession>
<proteinExistence type="inferred from homology"/>
<comment type="function">
    <text evidence="1">DNA-dependent RNA polymerase catalyzes the transcription of DNA into RNA using the four ribonucleoside triphosphates as substrates.</text>
</comment>
<comment type="catalytic activity">
    <reaction evidence="1">
        <text>RNA(n) + a ribonucleoside 5'-triphosphate = RNA(n+1) + diphosphate</text>
        <dbReference type="Rhea" id="RHEA:21248"/>
        <dbReference type="Rhea" id="RHEA-COMP:14527"/>
        <dbReference type="Rhea" id="RHEA-COMP:17342"/>
        <dbReference type="ChEBI" id="CHEBI:33019"/>
        <dbReference type="ChEBI" id="CHEBI:61557"/>
        <dbReference type="ChEBI" id="CHEBI:140395"/>
        <dbReference type="EC" id="2.7.7.6"/>
    </reaction>
</comment>
<comment type="cofactor">
    <cofactor evidence="1">
        <name>Mg(2+)</name>
        <dbReference type="ChEBI" id="CHEBI:18420"/>
    </cofactor>
    <text evidence="1">Binds 1 Mg(2+) ion per subunit.</text>
</comment>
<comment type="cofactor">
    <cofactor evidence="1">
        <name>Zn(2+)</name>
        <dbReference type="ChEBI" id="CHEBI:29105"/>
    </cofactor>
    <text evidence="1">Binds 2 Zn(2+) ions per subunit.</text>
</comment>
<comment type="subunit">
    <text evidence="1">The RNAP catalytic core consists of 2 alpha, 1 beta, 1 beta' and 1 omega subunit. When a sigma factor is associated with the core the holoenzyme is formed, which can initiate transcription.</text>
</comment>
<comment type="similarity">
    <text evidence="1">Belongs to the RNA polymerase beta' chain family.</text>
</comment>
<dbReference type="EC" id="2.7.7.6" evidence="1"/>
<dbReference type="EMBL" id="CP000750">
    <property type="protein sequence ID" value="ABS02170.1"/>
    <property type="molecule type" value="Genomic_DNA"/>
</dbReference>
<dbReference type="RefSeq" id="WP_012084988.1">
    <property type="nucleotide sequence ID" value="NC_009664.2"/>
</dbReference>
<dbReference type="SMR" id="A6W5T1"/>
<dbReference type="STRING" id="266940.Krad_0681"/>
<dbReference type="KEGG" id="kra:Krad_0681"/>
<dbReference type="eggNOG" id="COG0086">
    <property type="taxonomic scope" value="Bacteria"/>
</dbReference>
<dbReference type="HOGENOM" id="CLU_000524_3_1_11"/>
<dbReference type="OrthoDB" id="9815296at2"/>
<dbReference type="Proteomes" id="UP000001116">
    <property type="component" value="Chromosome"/>
</dbReference>
<dbReference type="GO" id="GO:0000428">
    <property type="term" value="C:DNA-directed RNA polymerase complex"/>
    <property type="evidence" value="ECO:0007669"/>
    <property type="project" value="UniProtKB-KW"/>
</dbReference>
<dbReference type="GO" id="GO:0003677">
    <property type="term" value="F:DNA binding"/>
    <property type="evidence" value="ECO:0007669"/>
    <property type="project" value="UniProtKB-UniRule"/>
</dbReference>
<dbReference type="GO" id="GO:0003899">
    <property type="term" value="F:DNA-directed RNA polymerase activity"/>
    <property type="evidence" value="ECO:0007669"/>
    <property type="project" value="UniProtKB-UniRule"/>
</dbReference>
<dbReference type="GO" id="GO:0000287">
    <property type="term" value="F:magnesium ion binding"/>
    <property type="evidence" value="ECO:0007669"/>
    <property type="project" value="UniProtKB-UniRule"/>
</dbReference>
<dbReference type="GO" id="GO:0008270">
    <property type="term" value="F:zinc ion binding"/>
    <property type="evidence" value="ECO:0007669"/>
    <property type="project" value="UniProtKB-UniRule"/>
</dbReference>
<dbReference type="GO" id="GO:0006351">
    <property type="term" value="P:DNA-templated transcription"/>
    <property type="evidence" value="ECO:0007669"/>
    <property type="project" value="UniProtKB-UniRule"/>
</dbReference>
<dbReference type="CDD" id="cd02655">
    <property type="entry name" value="RNAP_beta'_C"/>
    <property type="match status" value="1"/>
</dbReference>
<dbReference type="CDD" id="cd01609">
    <property type="entry name" value="RNAP_beta'_N"/>
    <property type="match status" value="1"/>
</dbReference>
<dbReference type="FunFam" id="1.10.150.390:FF:000002">
    <property type="entry name" value="DNA-directed RNA polymerase subunit beta"/>
    <property type="match status" value="1"/>
</dbReference>
<dbReference type="FunFam" id="1.10.40.90:FF:000001">
    <property type="entry name" value="DNA-directed RNA polymerase subunit beta"/>
    <property type="match status" value="1"/>
</dbReference>
<dbReference type="FunFam" id="4.10.860.120:FF:000001">
    <property type="entry name" value="DNA-directed RNA polymerase subunit beta"/>
    <property type="match status" value="1"/>
</dbReference>
<dbReference type="Gene3D" id="1.10.132.30">
    <property type="match status" value="1"/>
</dbReference>
<dbReference type="Gene3D" id="1.10.150.390">
    <property type="match status" value="1"/>
</dbReference>
<dbReference type="Gene3D" id="1.10.1790.20">
    <property type="match status" value="1"/>
</dbReference>
<dbReference type="Gene3D" id="1.10.40.90">
    <property type="match status" value="1"/>
</dbReference>
<dbReference type="Gene3D" id="2.40.40.20">
    <property type="match status" value="1"/>
</dbReference>
<dbReference type="Gene3D" id="2.40.50.100">
    <property type="match status" value="1"/>
</dbReference>
<dbReference type="Gene3D" id="6.10.250.2940">
    <property type="match status" value="1"/>
</dbReference>
<dbReference type="Gene3D" id="4.10.860.120">
    <property type="entry name" value="RNA polymerase II, clamp domain"/>
    <property type="match status" value="1"/>
</dbReference>
<dbReference type="Gene3D" id="1.10.274.100">
    <property type="entry name" value="RNA polymerase Rpb1, domain 3"/>
    <property type="match status" value="1"/>
</dbReference>
<dbReference type="HAMAP" id="MF_01322">
    <property type="entry name" value="RNApol_bact_RpoC"/>
    <property type="match status" value="1"/>
</dbReference>
<dbReference type="InterPro" id="IPR045867">
    <property type="entry name" value="DNA-dir_RpoC_beta_prime"/>
</dbReference>
<dbReference type="InterPro" id="IPR012754">
    <property type="entry name" value="DNA-dir_RpoC_beta_prime_bact"/>
</dbReference>
<dbReference type="InterPro" id="IPR000722">
    <property type="entry name" value="RNA_pol_asu"/>
</dbReference>
<dbReference type="InterPro" id="IPR006592">
    <property type="entry name" value="RNA_pol_N"/>
</dbReference>
<dbReference type="InterPro" id="IPR007080">
    <property type="entry name" value="RNA_pol_Rpb1_1"/>
</dbReference>
<dbReference type="InterPro" id="IPR007066">
    <property type="entry name" value="RNA_pol_Rpb1_3"/>
</dbReference>
<dbReference type="InterPro" id="IPR042102">
    <property type="entry name" value="RNA_pol_Rpb1_3_sf"/>
</dbReference>
<dbReference type="InterPro" id="IPR007083">
    <property type="entry name" value="RNA_pol_Rpb1_4"/>
</dbReference>
<dbReference type="InterPro" id="IPR007081">
    <property type="entry name" value="RNA_pol_Rpb1_5"/>
</dbReference>
<dbReference type="InterPro" id="IPR044893">
    <property type="entry name" value="RNA_pol_Rpb1_clamp_domain"/>
</dbReference>
<dbReference type="InterPro" id="IPR038120">
    <property type="entry name" value="Rpb1_funnel_sf"/>
</dbReference>
<dbReference type="NCBIfam" id="NF011498">
    <property type="entry name" value="PRK14906.1"/>
    <property type="match status" value="1"/>
</dbReference>
<dbReference type="NCBIfam" id="TIGR02386">
    <property type="entry name" value="rpoC_TIGR"/>
    <property type="match status" value="1"/>
</dbReference>
<dbReference type="PANTHER" id="PTHR19376">
    <property type="entry name" value="DNA-DIRECTED RNA POLYMERASE"/>
    <property type="match status" value="1"/>
</dbReference>
<dbReference type="PANTHER" id="PTHR19376:SF54">
    <property type="entry name" value="DNA-DIRECTED RNA POLYMERASE SUBUNIT BETA"/>
    <property type="match status" value="1"/>
</dbReference>
<dbReference type="Pfam" id="PF04997">
    <property type="entry name" value="RNA_pol_Rpb1_1"/>
    <property type="match status" value="1"/>
</dbReference>
<dbReference type="Pfam" id="PF00623">
    <property type="entry name" value="RNA_pol_Rpb1_2"/>
    <property type="match status" value="2"/>
</dbReference>
<dbReference type="Pfam" id="PF04983">
    <property type="entry name" value="RNA_pol_Rpb1_3"/>
    <property type="match status" value="1"/>
</dbReference>
<dbReference type="Pfam" id="PF05000">
    <property type="entry name" value="RNA_pol_Rpb1_4"/>
    <property type="match status" value="1"/>
</dbReference>
<dbReference type="Pfam" id="PF04998">
    <property type="entry name" value="RNA_pol_Rpb1_5"/>
    <property type="match status" value="1"/>
</dbReference>
<dbReference type="SMART" id="SM00663">
    <property type="entry name" value="RPOLA_N"/>
    <property type="match status" value="1"/>
</dbReference>
<dbReference type="SUPFAM" id="SSF64484">
    <property type="entry name" value="beta and beta-prime subunits of DNA dependent RNA-polymerase"/>
    <property type="match status" value="1"/>
</dbReference>
<feature type="chain" id="PRO_0000353384" description="DNA-directed RNA polymerase subunit beta'">
    <location>
        <begin position="1"/>
        <end position="1293"/>
    </location>
</feature>
<feature type="binding site" evidence="1">
    <location>
        <position position="60"/>
    </location>
    <ligand>
        <name>Zn(2+)</name>
        <dbReference type="ChEBI" id="CHEBI:29105"/>
        <label>1</label>
    </ligand>
</feature>
<feature type="binding site" evidence="1">
    <location>
        <position position="62"/>
    </location>
    <ligand>
        <name>Zn(2+)</name>
        <dbReference type="ChEBI" id="CHEBI:29105"/>
        <label>1</label>
    </ligand>
</feature>
<feature type="binding site" evidence="1">
    <location>
        <position position="75"/>
    </location>
    <ligand>
        <name>Zn(2+)</name>
        <dbReference type="ChEBI" id="CHEBI:29105"/>
        <label>1</label>
    </ligand>
</feature>
<feature type="binding site" evidence="1">
    <location>
        <position position="78"/>
    </location>
    <ligand>
        <name>Zn(2+)</name>
        <dbReference type="ChEBI" id="CHEBI:29105"/>
        <label>1</label>
    </ligand>
</feature>
<feature type="binding site" evidence="1">
    <location>
        <position position="535"/>
    </location>
    <ligand>
        <name>Mg(2+)</name>
        <dbReference type="ChEBI" id="CHEBI:18420"/>
    </ligand>
</feature>
<feature type="binding site" evidence="1">
    <location>
        <position position="537"/>
    </location>
    <ligand>
        <name>Mg(2+)</name>
        <dbReference type="ChEBI" id="CHEBI:18420"/>
    </ligand>
</feature>
<feature type="binding site" evidence="1">
    <location>
        <position position="539"/>
    </location>
    <ligand>
        <name>Mg(2+)</name>
        <dbReference type="ChEBI" id="CHEBI:18420"/>
    </ligand>
</feature>
<feature type="binding site" evidence="1">
    <location>
        <position position="877"/>
    </location>
    <ligand>
        <name>Zn(2+)</name>
        <dbReference type="ChEBI" id="CHEBI:29105"/>
        <label>2</label>
    </ligand>
</feature>
<feature type="binding site" evidence="1">
    <location>
        <position position="953"/>
    </location>
    <ligand>
        <name>Zn(2+)</name>
        <dbReference type="ChEBI" id="CHEBI:29105"/>
        <label>2</label>
    </ligand>
</feature>
<feature type="binding site" evidence="1">
    <location>
        <position position="960"/>
    </location>
    <ligand>
        <name>Zn(2+)</name>
        <dbReference type="ChEBI" id="CHEBI:29105"/>
        <label>2</label>
    </ligand>
</feature>
<feature type="binding site" evidence="1">
    <location>
        <position position="963"/>
    </location>
    <ligand>
        <name>Zn(2+)</name>
        <dbReference type="ChEBI" id="CHEBI:29105"/>
        <label>2</label>
    </ligand>
</feature>
<name>RPOC_KINRD</name>